<accession>P54016</accession>
<proteinExistence type="inferred from homology"/>
<name>RL23_METJA</name>
<reference key="1">
    <citation type="journal article" date="1996" name="Science">
        <title>Complete genome sequence of the methanogenic archaeon, Methanococcus jannaschii.</title>
        <authorList>
            <person name="Bult C.J."/>
            <person name="White O."/>
            <person name="Olsen G.J."/>
            <person name="Zhou L."/>
            <person name="Fleischmann R.D."/>
            <person name="Sutton G.G."/>
            <person name="Blake J.A."/>
            <person name="FitzGerald L.M."/>
            <person name="Clayton R.A."/>
            <person name="Gocayne J.D."/>
            <person name="Kerlavage A.R."/>
            <person name="Dougherty B.A."/>
            <person name="Tomb J.-F."/>
            <person name="Adams M.D."/>
            <person name="Reich C.I."/>
            <person name="Overbeek R."/>
            <person name="Kirkness E.F."/>
            <person name="Weinstock K.G."/>
            <person name="Merrick J.M."/>
            <person name="Glodek A."/>
            <person name="Scott J.L."/>
            <person name="Geoghagen N.S.M."/>
            <person name="Weidman J.F."/>
            <person name="Fuhrmann J.L."/>
            <person name="Nguyen D."/>
            <person name="Utterback T.R."/>
            <person name="Kelley J.M."/>
            <person name="Peterson J.D."/>
            <person name="Sadow P.W."/>
            <person name="Hanna M.C."/>
            <person name="Cotton M.D."/>
            <person name="Roberts K.M."/>
            <person name="Hurst M.A."/>
            <person name="Kaine B.P."/>
            <person name="Borodovsky M."/>
            <person name="Klenk H.-P."/>
            <person name="Fraser C.M."/>
            <person name="Smith H.O."/>
            <person name="Woese C.R."/>
            <person name="Venter J.C."/>
        </authorList>
    </citation>
    <scope>NUCLEOTIDE SEQUENCE [LARGE SCALE GENOMIC DNA]</scope>
    <source>
        <strain>ATCC 43067 / DSM 2661 / JAL-1 / JCM 10045 / NBRC 100440</strain>
    </source>
</reference>
<keyword id="KW-1185">Reference proteome</keyword>
<keyword id="KW-0687">Ribonucleoprotein</keyword>
<keyword id="KW-0689">Ribosomal protein</keyword>
<keyword id="KW-0694">RNA-binding</keyword>
<keyword id="KW-0699">rRNA-binding</keyword>
<organism>
    <name type="scientific">Methanocaldococcus jannaschii (strain ATCC 43067 / DSM 2661 / JAL-1 / JCM 10045 / NBRC 100440)</name>
    <name type="common">Methanococcus jannaschii</name>
    <dbReference type="NCBI Taxonomy" id="243232"/>
    <lineage>
        <taxon>Archaea</taxon>
        <taxon>Methanobacteriati</taxon>
        <taxon>Methanobacteriota</taxon>
        <taxon>Methanomada group</taxon>
        <taxon>Methanococci</taxon>
        <taxon>Methanococcales</taxon>
        <taxon>Methanocaldococcaceae</taxon>
        <taxon>Methanocaldococcus</taxon>
    </lineage>
</organism>
<gene>
    <name evidence="1" type="primary">rpl23</name>
    <name type="ordered locus">MJ0178</name>
</gene>
<evidence type="ECO:0000255" key="1">
    <source>
        <dbReference type="HAMAP-Rule" id="MF_01369"/>
    </source>
</evidence>
<evidence type="ECO:0000305" key="2"/>
<dbReference type="EMBL" id="L77117">
    <property type="protein sequence ID" value="AAB98163.1"/>
    <property type="molecule type" value="Genomic_DNA"/>
</dbReference>
<dbReference type="PIR" id="C64322">
    <property type="entry name" value="C64322"/>
</dbReference>
<dbReference type="RefSeq" id="WP_010869673.1">
    <property type="nucleotide sequence ID" value="NC_000909.1"/>
</dbReference>
<dbReference type="SMR" id="P54016"/>
<dbReference type="FunCoup" id="P54016">
    <property type="interactions" value="160"/>
</dbReference>
<dbReference type="STRING" id="243232.MJ_0178"/>
<dbReference type="PaxDb" id="243232-MJ_0178"/>
<dbReference type="EnsemblBacteria" id="AAB98163">
    <property type="protein sequence ID" value="AAB98163"/>
    <property type="gene ID" value="MJ_0178"/>
</dbReference>
<dbReference type="GeneID" id="1451025"/>
<dbReference type="KEGG" id="mja:MJ_0178"/>
<dbReference type="eggNOG" id="arCOG04072">
    <property type="taxonomic scope" value="Archaea"/>
</dbReference>
<dbReference type="HOGENOM" id="CLU_037562_4_2_2"/>
<dbReference type="InParanoid" id="P54016"/>
<dbReference type="OrthoDB" id="7751at2157"/>
<dbReference type="PhylomeDB" id="P54016"/>
<dbReference type="Proteomes" id="UP000000805">
    <property type="component" value="Chromosome"/>
</dbReference>
<dbReference type="GO" id="GO:0022625">
    <property type="term" value="C:cytosolic large ribosomal subunit"/>
    <property type="evidence" value="ECO:0000318"/>
    <property type="project" value="GO_Central"/>
</dbReference>
<dbReference type="GO" id="GO:0019843">
    <property type="term" value="F:rRNA binding"/>
    <property type="evidence" value="ECO:0007669"/>
    <property type="project" value="UniProtKB-UniRule"/>
</dbReference>
<dbReference type="GO" id="GO:0003735">
    <property type="term" value="F:structural constituent of ribosome"/>
    <property type="evidence" value="ECO:0000318"/>
    <property type="project" value="GO_Central"/>
</dbReference>
<dbReference type="GO" id="GO:0006412">
    <property type="term" value="P:translation"/>
    <property type="evidence" value="ECO:0007669"/>
    <property type="project" value="UniProtKB-UniRule"/>
</dbReference>
<dbReference type="FunFam" id="3.30.70.330:FF:001084">
    <property type="entry name" value="50S ribosomal protein L23"/>
    <property type="match status" value="1"/>
</dbReference>
<dbReference type="Gene3D" id="3.30.70.330">
    <property type="match status" value="1"/>
</dbReference>
<dbReference type="HAMAP" id="MF_01369_A">
    <property type="entry name" value="Ribosomal_uL23_A"/>
    <property type="match status" value="1"/>
</dbReference>
<dbReference type="HAMAP" id="MF_01369_B">
    <property type="entry name" value="Ribosomal_uL23_B"/>
    <property type="match status" value="1"/>
</dbReference>
<dbReference type="InterPro" id="IPR012677">
    <property type="entry name" value="Nucleotide-bd_a/b_plait_sf"/>
</dbReference>
<dbReference type="InterPro" id="IPR019985">
    <property type="entry name" value="Ribosomal_uL23"/>
</dbReference>
<dbReference type="InterPro" id="IPR013025">
    <property type="entry name" value="Ribosomal_uL23-like"/>
</dbReference>
<dbReference type="InterPro" id="IPR012678">
    <property type="entry name" value="Ribosomal_uL23/eL15/eS24_sf"/>
</dbReference>
<dbReference type="InterPro" id="IPR001014">
    <property type="entry name" value="Ribosomal_uL23_CS"/>
</dbReference>
<dbReference type="NCBIfam" id="NF011118">
    <property type="entry name" value="PRK14548.1"/>
    <property type="match status" value="1"/>
</dbReference>
<dbReference type="NCBIfam" id="TIGR03636">
    <property type="entry name" value="uL23_arch"/>
    <property type="match status" value="1"/>
</dbReference>
<dbReference type="PANTHER" id="PTHR11620">
    <property type="entry name" value="60S RIBOSOMAL PROTEIN L23A"/>
    <property type="match status" value="1"/>
</dbReference>
<dbReference type="Pfam" id="PF00276">
    <property type="entry name" value="Ribosomal_L23"/>
    <property type="match status" value="1"/>
</dbReference>
<dbReference type="SUPFAM" id="SSF54189">
    <property type="entry name" value="Ribosomal proteins S24e, L23 and L15e"/>
    <property type="match status" value="1"/>
</dbReference>
<dbReference type="PROSITE" id="PS00050">
    <property type="entry name" value="RIBOSOMAL_L23"/>
    <property type="match status" value="1"/>
</dbReference>
<feature type="chain" id="PRO_0000129437" description="Large ribosomal subunit protein uL23">
    <location>
        <begin position="1"/>
        <end position="86"/>
    </location>
</feature>
<protein>
    <recommendedName>
        <fullName evidence="1">Large ribosomal subunit protein uL23</fullName>
    </recommendedName>
    <alternativeName>
        <fullName evidence="2">50S ribosomal protein L23</fullName>
    </alternativeName>
</protein>
<sequence>MDAFDVIKAPVVTEKTVRMIEEENKLVFYVDRRATKQDIKRAMKELFDVEVEKVNTLITPKGEKKAYVKLKEGYDASKIAASLGIY</sequence>
<comment type="function">
    <text evidence="1">Binds to 23S rRNA. One of the proteins that surrounds the polypeptide exit tunnel on the outside of the ribosome.</text>
</comment>
<comment type="subunit">
    <text evidence="1">Part of the 50S ribosomal subunit. Contacts protein L29.</text>
</comment>
<comment type="similarity">
    <text evidence="1">Belongs to the universal ribosomal protein uL23 family.</text>
</comment>